<accession>B7N0B1</accession>
<reference key="1">
    <citation type="journal article" date="2009" name="PLoS Genet.">
        <title>Organised genome dynamics in the Escherichia coli species results in highly diverse adaptive paths.</title>
        <authorList>
            <person name="Touchon M."/>
            <person name="Hoede C."/>
            <person name="Tenaillon O."/>
            <person name="Barbe V."/>
            <person name="Baeriswyl S."/>
            <person name="Bidet P."/>
            <person name="Bingen E."/>
            <person name="Bonacorsi S."/>
            <person name="Bouchier C."/>
            <person name="Bouvet O."/>
            <person name="Calteau A."/>
            <person name="Chiapello H."/>
            <person name="Clermont O."/>
            <person name="Cruveiller S."/>
            <person name="Danchin A."/>
            <person name="Diard M."/>
            <person name="Dossat C."/>
            <person name="Karoui M.E."/>
            <person name="Frapy E."/>
            <person name="Garry L."/>
            <person name="Ghigo J.M."/>
            <person name="Gilles A.M."/>
            <person name="Johnson J."/>
            <person name="Le Bouguenec C."/>
            <person name="Lescat M."/>
            <person name="Mangenot S."/>
            <person name="Martinez-Jehanne V."/>
            <person name="Matic I."/>
            <person name="Nassif X."/>
            <person name="Oztas S."/>
            <person name="Petit M.A."/>
            <person name="Pichon C."/>
            <person name="Rouy Z."/>
            <person name="Ruf C.S."/>
            <person name="Schneider D."/>
            <person name="Tourret J."/>
            <person name="Vacherie B."/>
            <person name="Vallenet D."/>
            <person name="Medigue C."/>
            <person name="Rocha E.P.C."/>
            <person name="Denamur E."/>
        </authorList>
    </citation>
    <scope>NUCLEOTIDE SEQUENCE [LARGE SCALE GENOMIC DNA]</scope>
    <source>
        <strain>ED1a</strain>
    </source>
</reference>
<proteinExistence type="inferred from homology"/>
<evidence type="ECO:0000255" key="1">
    <source>
        <dbReference type="HAMAP-Rule" id="MF_01845"/>
    </source>
</evidence>
<protein>
    <recommendedName>
        <fullName evidence="1">UPF0597 protein YhaM</fullName>
    </recommendedName>
</protein>
<name>YHAM_ECO81</name>
<gene>
    <name evidence="1" type="primary">yhaM</name>
    <name type="ordered locus">ECED1_3775</name>
</gene>
<dbReference type="EMBL" id="CU928162">
    <property type="protein sequence ID" value="CAR09779.1"/>
    <property type="molecule type" value="Genomic_DNA"/>
</dbReference>
<dbReference type="KEGG" id="ecq:ECED1_3775"/>
<dbReference type="HOGENOM" id="CLU_051840_0_0_6"/>
<dbReference type="Proteomes" id="UP000000748">
    <property type="component" value="Chromosome"/>
</dbReference>
<dbReference type="GO" id="GO:0080146">
    <property type="term" value="F:L-cysteine desulfhydrase activity"/>
    <property type="evidence" value="ECO:0007669"/>
    <property type="project" value="TreeGrafter"/>
</dbReference>
<dbReference type="GO" id="GO:0019450">
    <property type="term" value="P:L-cysteine catabolic process to pyruvate"/>
    <property type="evidence" value="ECO:0007669"/>
    <property type="project" value="TreeGrafter"/>
</dbReference>
<dbReference type="HAMAP" id="MF_01845">
    <property type="entry name" value="UPF0597"/>
    <property type="match status" value="1"/>
</dbReference>
<dbReference type="InterPro" id="IPR005130">
    <property type="entry name" value="Ser_deHydtase-like_asu"/>
</dbReference>
<dbReference type="InterPro" id="IPR021144">
    <property type="entry name" value="UPF0597"/>
</dbReference>
<dbReference type="PANTHER" id="PTHR30501">
    <property type="entry name" value="UPF0597 PROTEIN YHAM"/>
    <property type="match status" value="1"/>
</dbReference>
<dbReference type="PANTHER" id="PTHR30501:SF2">
    <property type="entry name" value="UPF0597 PROTEIN YHAM"/>
    <property type="match status" value="1"/>
</dbReference>
<dbReference type="Pfam" id="PF03313">
    <property type="entry name" value="SDH_alpha"/>
    <property type="match status" value="1"/>
</dbReference>
<dbReference type="PIRSF" id="PIRSF006054">
    <property type="entry name" value="UCP006054"/>
    <property type="match status" value="1"/>
</dbReference>
<organism>
    <name type="scientific">Escherichia coli O81 (strain ED1a)</name>
    <dbReference type="NCBI Taxonomy" id="585397"/>
    <lineage>
        <taxon>Bacteria</taxon>
        <taxon>Pseudomonadati</taxon>
        <taxon>Pseudomonadota</taxon>
        <taxon>Gammaproteobacteria</taxon>
        <taxon>Enterobacterales</taxon>
        <taxon>Enterobacteriaceae</taxon>
        <taxon>Escherichia</taxon>
    </lineage>
</organism>
<feature type="chain" id="PRO_1000188455" description="UPF0597 protein YhaM">
    <location>
        <begin position="1"/>
        <end position="436"/>
    </location>
</feature>
<comment type="similarity">
    <text evidence="1">Belongs to the UPF0597 family.</text>
</comment>
<sequence>MFDSTLNPLWQRYILAVQEEVKPALGCTEPISLALAAAVAAAELEGPVERVEAWVSPNLMKNGLGVTVPGTGMVGLPIAAALGALGGNANAGLEVLKDATAQAISDAKALLAAGKVSVKIQEPCDEILFSRAKVWNGEKWACVTIVGGHTNIVHIETHNGVVFTQQACVTEGEQESPLTVLSRTTLAEILKFVNEVPFAAIRFILDSAKLNCALSQEGLSGNWGLHIGATLEKQCARGLLAKDLSSSIVIRTSAASDARMGGATLPAMSNSGSGNQGITATMPVVVVAEHFGADDERLARALMLSHLSAIYIHNQLPRLSALCAATTAAMGAAAGMAWLVDGRYETISMAISSMIGDVSGMICDGASNSCAMKVSTSASAAWKAVLMALDDTAVTGNEGIVAHDVEQSIANLCALASHSMQQTDRQIIEIMASKAR</sequence>